<sequence>MTKGILGRKIGMTQVFGENGELIPVTVVEAKENVVLQKKTVEVDGYNAIQVGFEDKKAYKKDAKSNKYANKPAEGHAKKADAAPKRFIREFRNVDVDAYEVGQEVSVDTFVAGDVIDVTGVSKGKGFQGAIKRHGQSRGPMSHGSHFHRAPGSVGMASDASRVFKGQKMPGRMGGNTVTVQNLEVVQVDTENKVILVKGNVPGPKKGLVEIRTSIKKGNK</sequence>
<accession>A6QJ92</accession>
<organism>
    <name type="scientific">Staphylococcus aureus (strain Newman)</name>
    <dbReference type="NCBI Taxonomy" id="426430"/>
    <lineage>
        <taxon>Bacteria</taxon>
        <taxon>Bacillati</taxon>
        <taxon>Bacillota</taxon>
        <taxon>Bacilli</taxon>
        <taxon>Bacillales</taxon>
        <taxon>Staphylococcaceae</taxon>
        <taxon>Staphylococcus</taxon>
    </lineage>
</organism>
<gene>
    <name evidence="1" type="primary">rplC</name>
    <name type="ordered locus">NWMN_2152</name>
</gene>
<proteinExistence type="inferred from homology"/>
<comment type="function">
    <text evidence="1">One of the primary rRNA binding proteins, it binds directly near the 3'-end of the 23S rRNA, where it nucleates assembly of the 50S subunit.</text>
</comment>
<comment type="subunit">
    <text evidence="1">Part of the 50S ribosomal subunit. Forms a cluster with proteins L14 and L19.</text>
</comment>
<comment type="similarity">
    <text evidence="1">Belongs to the universal ribosomal protein uL3 family.</text>
</comment>
<reference key="1">
    <citation type="journal article" date="2008" name="J. Bacteriol.">
        <title>Genome sequence of Staphylococcus aureus strain Newman and comparative analysis of staphylococcal genomes: polymorphism and evolution of two major pathogenicity islands.</title>
        <authorList>
            <person name="Baba T."/>
            <person name="Bae T."/>
            <person name="Schneewind O."/>
            <person name="Takeuchi F."/>
            <person name="Hiramatsu K."/>
        </authorList>
    </citation>
    <scope>NUCLEOTIDE SEQUENCE [LARGE SCALE GENOMIC DNA]</scope>
    <source>
        <strain>Newman</strain>
    </source>
</reference>
<name>RL3_STAAE</name>
<keyword id="KW-0687">Ribonucleoprotein</keyword>
<keyword id="KW-0689">Ribosomal protein</keyword>
<keyword id="KW-0694">RNA-binding</keyword>
<keyword id="KW-0699">rRNA-binding</keyword>
<protein>
    <recommendedName>
        <fullName evidence="1">Large ribosomal subunit protein uL3</fullName>
    </recommendedName>
    <alternativeName>
        <fullName evidence="3">50S ribosomal protein L3</fullName>
    </alternativeName>
</protein>
<dbReference type="EMBL" id="AP009351">
    <property type="protein sequence ID" value="BAF68424.1"/>
    <property type="molecule type" value="Genomic_DNA"/>
</dbReference>
<dbReference type="RefSeq" id="WP_000160212.1">
    <property type="nucleotide sequence ID" value="NZ_JBBIAE010000006.1"/>
</dbReference>
<dbReference type="SMR" id="A6QJ92"/>
<dbReference type="GeneID" id="98346562"/>
<dbReference type="KEGG" id="sae:NWMN_2152"/>
<dbReference type="HOGENOM" id="CLU_044142_4_1_9"/>
<dbReference type="Proteomes" id="UP000006386">
    <property type="component" value="Chromosome"/>
</dbReference>
<dbReference type="GO" id="GO:0022625">
    <property type="term" value="C:cytosolic large ribosomal subunit"/>
    <property type="evidence" value="ECO:0007669"/>
    <property type="project" value="TreeGrafter"/>
</dbReference>
<dbReference type="GO" id="GO:0019843">
    <property type="term" value="F:rRNA binding"/>
    <property type="evidence" value="ECO:0007669"/>
    <property type="project" value="UniProtKB-UniRule"/>
</dbReference>
<dbReference type="GO" id="GO:0003735">
    <property type="term" value="F:structural constituent of ribosome"/>
    <property type="evidence" value="ECO:0007669"/>
    <property type="project" value="InterPro"/>
</dbReference>
<dbReference type="GO" id="GO:0006412">
    <property type="term" value="P:translation"/>
    <property type="evidence" value="ECO:0007669"/>
    <property type="project" value="UniProtKB-UniRule"/>
</dbReference>
<dbReference type="FunFam" id="2.40.30.10:FF:000004">
    <property type="entry name" value="50S ribosomal protein L3"/>
    <property type="match status" value="1"/>
</dbReference>
<dbReference type="FunFam" id="3.30.160.810:FF:000002">
    <property type="entry name" value="50S ribosomal protein L3"/>
    <property type="match status" value="1"/>
</dbReference>
<dbReference type="Gene3D" id="3.30.160.810">
    <property type="match status" value="1"/>
</dbReference>
<dbReference type="Gene3D" id="2.40.30.10">
    <property type="entry name" value="Translation factors"/>
    <property type="match status" value="1"/>
</dbReference>
<dbReference type="HAMAP" id="MF_01325_B">
    <property type="entry name" value="Ribosomal_uL3_B"/>
    <property type="match status" value="1"/>
</dbReference>
<dbReference type="InterPro" id="IPR000597">
    <property type="entry name" value="Ribosomal_uL3"/>
</dbReference>
<dbReference type="InterPro" id="IPR019927">
    <property type="entry name" value="Ribosomal_uL3_bac/org-type"/>
</dbReference>
<dbReference type="InterPro" id="IPR019926">
    <property type="entry name" value="Ribosomal_uL3_CS"/>
</dbReference>
<dbReference type="InterPro" id="IPR009000">
    <property type="entry name" value="Transl_B-barrel_sf"/>
</dbReference>
<dbReference type="NCBIfam" id="TIGR03625">
    <property type="entry name" value="L3_bact"/>
    <property type="match status" value="1"/>
</dbReference>
<dbReference type="PANTHER" id="PTHR11229">
    <property type="entry name" value="50S RIBOSOMAL PROTEIN L3"/>
    <property type="match status" value="1"/>
</dbReference>
<dbReference type="PANTHER" id="PTHR11229:SF16">
    <property type="entry name" value="LARGE RIBOSOMAL SUBUNIT PROTEIN UL3C"/>
    <property type="match status" value="1"/>
</dbReference>
<dbReference type="Pfam" id="PF00297">
    <property type="entry name" value="Ribosomal_L3"/>
    <property type="match status" value="1"/>
</dbReference>
<dbReference type="SUPFAM" id="SSF50447">
    <property type="entry name" value="Translation proteins"/>
    <property type="match status" value="1"/>
</dbReference>
<dbReference type="PROSITE" id="PS00474">
    <property type="entry name" value="RIBOSOMAL_L3"/>
    <property type="match status" value="1"/>
</dbReference>
<feature type="chain" id="PRO_1000073255" description="Large ribosomal subunit protein uL3">
    <location>
        <begin position="1"/>
        <end position="220"/>
    </location>
</feature>
<feature type="region of interest" description="Disordered" evidence="2">
    <location>
        <begin position="130"/>
        <end position="156"/>
    </location>
</feature>
<evidence type="ECO:0000255" key="1">
    <source>
        <dbReference type="HAMAP-Rule" id="MF_01325"/>
    </source>
</evidence>
<evidence type="ECO:0000256" key="2">
    <source>
        <dbReference type="SAM" id="MobiDB-lite"/>
    </source>
</evidence>
<evidence type="ECO:0000305" key="3"/>